<feature type="chain" id="PRO_1000123302" description="Phosphopantetheine adenylyltransferase">
    <location>
        <begin position="1"/>
        <end position="162"/>
    </location>
</feature>
<feature type="binding site" evidence="1">
    <location>
        <begin position="11"/>
        <end position="12"/>
    </location>
    <ligand>
        <name>ATP</name>
        <dbReference type="ChEBI" id="CHEBI:30616"/>
    </ligand>
</feature>
<feature type="binding site" evidence="1">
    <location>
        <position position="11"/>
    </location>
    <ligand>
        <name>substrate</name>
    </ligand>
</feature>
<feature type="binding site" evidence="1">
    <location>
        <position position="19"/>
    </location>
    <ligand>
        <name>ATP</name>
        <dbReference type="ChEBI" id="CHEBI:30616"/>
    </ligand>
</feature>
<feature type="binding site" evidence="1">
    <location>
        <position position="43"/>
    </location>
    <ligand>
        <name>substrate</name>
    </ligand>
</feature>
<feature type="binding site" evidence="1">
    <location>
        <position position="76"/>
    </location>
    <ligand>
        <name>substrate</name>
    </ligand>
</feature>
<feature type="binding site" evidence="1">
    <location>
        <position position="90"/>
    </location>
    <ligand>
        <name>substrate</name>
    </ligand>
</feature>
<feature type="binding site" evidence="1">
    <location>
        <begin position="91"/>
        <end position="93"/>
    </location>
    <ligand>
        <name>ATP</name>
        <dbReference type="ChEBI" id="CHEBI:30616"/>
    </ligand>
</feature>
<feature type="binding site" evidence="1">
    <location>
        <position position="101"/>
    </location>
    <ligand>
        <name>ATP</name>
        <dbReference type="ChEBI" id="CHEBI:30616"/>
    </ligand>
</feature>
<feature type="binding site" evidence="1">
    <location>
        <begin position="126"/>
        <end position="132"/>
    </location>
    <ligand>
        <name>ATP</name>
        <dbReference type="ChEBI" id="CHEBI:30616"/>
    </ligand>
</feature>
<feature type="site" description="Transition state stabilizer" evidence="1">
    <location>
        <position position="19"/>
    </location>
</feature>
<protein>
    <recommendedName>
        <fullName evidence="1">Phosphopantetheine adenylyltransferase</fullName>
        <ecNumber evidence="1">2.7.7.3</ecNumber>
    </recommendedName>
    <alternativeName>
        <fullName evidence="1">Dephospho-CoA pyrophosphorylase</fullName>
    </alternativeName>
    <alternativeName>
        <fullName evidence="1">Pantetheine-phosphate adenylyltransferase</fullName>
        <shortName evidence="1">PPAT</shortName>
    </alternativeName>
</protein>
<name>COAD_STRP7</name>
<reference key="1">
    <citation type="journal article" date="2010" name="Genome Biol.">
        <title>Structure and dynamics of the pan-genome of Streptococcus pneumoniae and closely related species.</title>
        <authorList>
            <person name="Donati C."/>
            <person name="Hiller N.L."/>
            <person name="Tettelin H."/>
            <person name="Muzzi A."/>
            <person name="Croucher N.J."/>
            <person name="Angiuoli S.V."/>
            <person name="Oggioni M."/>
            <person name="Dunning Hotopp J.C."/>
            <person name="Hu F.Z."/>
            <person name="Riley D.R."/>
            <person name="Covacci A."/>
            <person name="Mitchell T.J."/>
            <person name="Bentley S.D."/>
            <person name="Kilian M."/>
            <person name="Ehrlich G.D."/>
            <person name="Rappuoli R."/>
            <person name="Moxon E.R."/>
            <person name="Masignani V."/>
        </authorList>
    </citation>
    <scope>NUCLEOTIDE SEQUENCE [LARGE SCALE GENOMIC DNA]</scope>
    <source>
        <strain>70585</strain>
    </source>
</reference>
<proteinExistence type="inferred from homology"/>
<organism>
    <name type="scientific">Streptococcus pneumoniae (strain 70585)</name>
    <dbReference type="NCBI Taxonomy" id="488221"/>
    <lineage>
        <taxon>Bacteria</taxon>
        <taxon>Bacillati</taxon>
        <taxon>Bacillota</taxon>
        <taxon>Bacilli</taxon>
        <taxon>Lactobacillales</taxon>
        <taxon>Streptococcaceae</taxon>
        <taxon>Streptococcus</taxon>
    </lineage>
</organism>
<accession>C1CA14</accession>
<evidence type="ECO:0000255" key="1">
    <source>
        <dbReference type="HAMAP-Rule" id="MF_00151"/>
    </source>
</evidence>
<comment type="function">
    <text evidence="1">Reversibly transfers an adenylyl group from ATP to 4'-phosphopantetheine, yielding dephospho-CoA (dPCoA) and pyrophosphate.</text>
</comment>
<comment type="catalytic activity">
    <reaction evidence="1">
        <text>(R)-4'-phosphopantetheine + ATP + H(+) = 3'-dephospho-CoA + diphosphate</text>
        <dbReference type="Rhea" id="RHEA:19801"/>
        <dbReference type="ChEBI" id="CHEBI:15378"/>
        <dbReference type="ChEBI" id="CHEBI:30616"/>
        <dbReference type="ChEBI" id="CHEBI:33019"/>
        <dbReference type="ChEBI" id="CHEBI:57328"/>
        <dbReference type="ChEBI" id="CHEBI:61723"/>
        <dbReference type="EC" id="2.7.7.3"/>
    </reaction>
</comment>
<comment type="cofactor">
    <cofactor evidence="1">
        <name>Mg(2+)</name>
        <dbReference type="ChEBI" id="CHEBI:18420"/>
    </cofactor>
</comment>
<comment type="pathway">
    <text evidence="1">Cofactor biosynthesis; coenzyme A biosynthesis; CoA from (R)-pantothenate: step 4/5.</text>
</comment>
<comment type="subunit">
    <text evidence="1">Homohexamer.</text>
</comment>
<comment type="subcellular location">
    <subcellularLocation>
        <location evidence="1">Cytoplasm</location>
    </subcellularLocation>
</comment>
<comment type="similarity">
    <text evidence="1">Belongs to the bacterial CoaD family.</text>
</comment>
<gene>
    <name evidence="1" type="primary">coaD</name>
    <name type="ordered locus">SP70585_2041</name>
</gene>
<sequence>MSDKIGLFTGSFDPMTNGHLDIIERASRLFDKLYVGIFFNPHKQGFLPLENRKRGLEKAVKHLGNVKVVSSHDKLVVDVAKRLGATCLVRGLRNASDLQYEASFDYYNHQLSSDIETIYLHSRPEHLYISSSGVRELLKFGQDIACYVPESILEEIRNEKKD</sequence>
<dbReference type="EC" id="2.7.7.3" evidence="1"/>
<dbReference type="EMBL" id="CP000918">
    <property type="protein sequence ID" value="ACO16200.1"/>
    <property type="molecule type" value="Genomic_DNA"/>
</dbReference>
<dbReference type="RefSeq" id="WP_001280753.1">
    <property type="nucleotide sequence ID" value="NC_012468.1"/>
</dbReference>
<dbReference type="SMR" id="C1CA14"/>
<dbReference type="KEGG" id="snm:SP70585_2041"/>
<dbReference type="HOGENOM" id="CLU_100149_0_1_9"/>
<dbReference type="UniPathway" id="UPA00241">
    <property type="reaction ID" value="UER00355"/>
</dbReference>
<dbReference type="Proteomes" id="UP000002211">
    <property type="component" value="Chromosome"/>
</dbReference>
<dbReference type="GO" id="GO:0005737">
    <property type="term" value="C:cytoplasm"/>
    <property type="evidence" value="ECO:0007669"/>
    <property type="project" value="UniProtKB-SubCell"/>
</dbReference>
<dbReference type="GO" id="GO:0005524">
    <property type="term" value="F:ATP binding"/>
    <property type="evidence" value="ECO:0007669"/>
    <property type="project" value="UniProtKB-KW"/>
</dbReference>
<dbReference type="GO" id="GO:0004595">
    <property type="term" value="F:pantetheine-phosphate adenylyltransferase activity"/>
    <property type="evidence" value="ECO:0007669"/>
    <property type="project" value="UniProtKB-UniRule"/>
</dbReference>
<dbReference type="GO" id="GO:0015937">
    <property type="term" value="P:coenzyme A biosynthetic process"/>
    <property type="evidence" value="ECO:0007669"/>
    <property type="project" value="UniProtKB-UniRule"/>
</dbReference>
<dbReference type="CDD" id="cd02163">
    <property type="entry name" value="PPAT"/>
    <property type="match status" value="1"/>
</dbReference>
<dbReference type="Gene3D" id="3.40.50.620">
    <property type="entry name" value="HUPs"/>
    <property type="match status" value="1"/>
</dbReference>
<dbReference type="HAMAP" id="MF_00151">
    <property type="entry name" value="PPAT_bact"/>
    <property type="match status" value="1"/>
</dbReference>
<dbReference type="InterPro" id="IPR004821">
    <property type="entry name" value="Cyt_trans-like"/>
</dbReference>
<dbReference type="InterPro" id="IPR001980">
    <property type="entry name" value="PPAT"/>
</dbReference>
<dbReference type="InterPro" id="IPR014729">
    <property type="entry name" value="Rossmann-like_a/b/a_fold"/>
</dbReference>
<dbReference type="NCBIfam" id="TIGR01510">
    <property type="entry name" value="coaD_prev_kdtB"/>
    <property type="match status" value="1"/>
</dbReference>
<dbReference type="NCBIfam" id="TIGR00125">
    <property type="entry name" value="cyt_tran_rel"/>
    <property type="match status" value="1"/>
</dbReference>
<dbReference type="PANTHER" id="PTHR21342">
    <property type="entry name" value="PHOSPHOPANTETHEINE ADENYLYLTRANSFERASE"/>
    <property type="match status" value="1"/>
</dbReference>
<dbReference type="PANTHER" id="PTHR21342:SF1">
    <property type="entry name" value="PHOSPHOPANTETHEINE ADENYLYLTRANSFERASE"/>
    <property type="match status" value="1"/>
</dbReference>
<dbReference type="Pfam" id="PF01467">
    <property type="entry name" value="CTP_transf_like"/>
    <property type="match status" value="1"/>
</dbReference>
<dbReference type="PRINTS" id="PR01020">
    <property type="entry name" value="LPSBIOSNTHSS"/>
</dbReference>
<dbReference type="SUPFAM" id="SSF52374">
    <property type="entry name" value="Nucleotidylyl transferase"/>
    <property type="match status" value="1"/>
</dbReference>
<keyword id="KW-0067">ATP-binding</keyword>
<keyword id="KW-0173">Coenzyme A biosynthesis</keyword>
<keyword id="KW-0963">Cytoplasm</keyword>
<keyword id="KW-0460">Magnesium</keyword>
<keyword id="KW-0547">Nucleotide-binding</keyword>
<keyword id="KW-0548">Nucleotidyltransferase</keyword>
<keyword id="KW-0808">Transferase</keyword>